<dbReference type="EC" id="2.7.1.24" evidence="1"/>
<dbReference type="EMBL" id="CP000240">
    <property type="protein sequence ID" value="ABD02280.1"/>
    <property type="molecule type" value="Genomic_DNA"/>
</dbReference>
<dbReference type="RefSeq" id="WP_011432930.1">
    <property type="nucleotide sequence ID" value="NC_007776.1"/>
</dbReference>
<dbReference type="SMR" id="Q2JLX1"/>
<dbReference type="STRING" id="321332.CYB_1306"/>
<dbReference type="KEGG" id="cyb:CYB_1306"/>
<dbReference type="eggNOG" id="COG0237">
    <property type="taxonomic scope" value="Bacteria"/>
</dbReference>
<dbReference type="HOGENOM" id="CLU_057180_0_0_3"/>
<dbReference type="OrthoDB" id="9812943at2"/>
<dbReference type="UniPathway" id="UPA00241">
    <property type="reaction ID" value="UER00356"/>
</dbReference>
<dbReference type="Proteomes" id="UP000001938">
    <property type="component" value="Chromosome"/>
</dbReference>
<dbReference type="GO" id="GO:0005737">
    <property type="term" value="C:cytoplasm"/>
    <property type="evidence" value="ECO:0007669"/>
    <property type="project" value="UniProtKB-SubCell"/>
</dbReference>
<dbReference type="GO" id="GO:0005524">
    <property type="term" value="F:ATP binding"/>
    <property type="evidence" value="ECO:0007669"/>
    <property type="project" value="UniProtKB-UniRule"/>
</dbReference>
<dbReference type="GO" id="GO:0004140">
    <property type="term" value="F:dephospho-CoA kinase activity"/>
    <property type="evidence" value="ECO:0007669"/>
    <property type="project" value="UniProtKB-UniRule"/>
</dbReference>
<dbReference type="GO" id="GO:0015937">
    <property type="term" value="P:coenzyme A biosynthetic process"/>
    <property type="evidence" value="ECO:0007669"/>
    <property type="project" value="UniProtKB-UniRule"/>
</dbReference>
<dbReference type="CDD" id="cd02022">
    <property type="entry name" value="DPCK"/>
    <property type="match status" value="1"/>
</dbReference>
<dbReference type="Gene3D" id="3.40.50.300">
    <property type="entry name" value="P-loop containing nucleotide triphosphate hydrolases"/>
    <property type="match status" value="1"/>
</dbReference>
<dbReference type="HAMAP" id="MF_00376">
    <property type="entry name" value="Dephospho_CoA_kinase"/>
    <property type="match status" value="1"/>
</dbReference>
<dbReference type="InterPro" id="IPR001977">
    <property type="entry name" value="Depp_CoAkinase"/>
</dbReference>
<dbReference type="InterPro" id="IPR027417">
    <property type="entry name" value="P-loop_NTPase"/>
</dbReference>
<dbReference type="NCBIfam" id="TIGR00152">
    <property type="entry name" value="dephospho-CoA kinase"/>
    <property type="match status" value="2"/>
</dbReference>
<dbReference type="PANTHER" id="PTHR10695:SF46">
    <property type="entry name" value="BIFUNCTIONAL COENZYME A SYNTHASE-RELATED"/>
    <property type="match status" value="1"/>
</dbReference>
<dbReference type="PANTHER" id="PTHR10695">
    <property type="entry name" value="DEPHOSPHO-COA KINASE-RELATED"/>
    <property type="match status" value="1"/>
</dbReference>
<dbReference type="Pfam" id="PF01121">
    <property type="entry name" value="CoaE"/>
    <property type="match status" value="2"/>
</dbReference>
<dbReference type="SUPFAM" id="SSF52540">
    <property type="entry name" value="P-loop containing nucleoside triphosphate hydrolases"/>
    <property type="match status" value="1"/>
</dbReference>
<dbReference type="PROSITE" id="PS51219">
    <property type="entry name" value="DPCK"/>
    <property type="match status" value="1"/>
</dbReference>
<keyword id="KW-0067">ATP-binding</keyword>
<keyword id="KW-0173">Coenzyme A biosynthesis</keyword>
<keyword id="KW-0963">Cytoplasm</keyword>
<keyword id="KW-0418">Kinase</keyword>
<keyword id="KW-0547">Nucleotide-binding</keyword>
<keyword id="KW-1185">Reference proteome</keyword>
<keyword id="KW-0808">Transferase</keyword>
<accession>Q2JLX1</accession>
<name>COAE_SYNJB</name>
<proteinExistence type="inferred from homology"/>
<reference key="1">
    <citation type="journal article" date="2007" name="ISME J.">
        <title>Population level functional diversity in a microbial community revealed by comparative genomic and metagenomic analyses.</title>
        <authorList>
            <person name="Bhaya D."/>
            <person name="Grossman A.R."/>
            <person name="Steunou A.-S."/>
            <person name="Khuri N."/>
            <person name="Cohan F.M."/>
            <person name="Hamamura N."/>
            <person name="Melendrez M.C."/>
            <person name="Bateson M.M."/>
            <person name="Ward D.M."/>
            <person name="Heidelberg J.F."/>
        </authorList>
    </citation>
    <scope>NUCLEOTIDE SEQUENCE [LARGE SCALE GENOMIC DNA]</scope>
    <source>
        <strain>JA-2-3B'a(2-13)</strain>
    </source>
</reference>
<comment type="function">
    <text evidence="1">Catalyzes the phosphorylation of the 3'-hydroxyl group of dephosphocoenzyme A to form coenzyme A.</text>
</comment>
<comment type="catalytic activity">
    <reaction evidence="1">
        <text>3'-dephospho-CoA + ATP = ADP + CoA + H(+)</text>
        <dbReference type="Rhea" id="RHEA:18245"/>
        <dbReference type="ChEBI" id="CHEBI:15378"/>
        <dbReference type="ChEBI" id="CHEBI:30616"/>
        <dbReference type="ChEBI" id="CHEBI:57287"/>
        <dbReference type="ChEBI" id="CHEBI:57328"/>
        <dbReference type="ChEBI" id="CHEBI:456216"/>
        <dbReference type="EC" id="2.7.1.24"/>
    </reaction>
</comment>
<comment type="pathway">
    <text evidence="1">Cofactor biosynthesis; coenzyme A biosynthesis; CoA from (R)-pantothenate: step 5/5.</text>
</comment>
<comment type="subcellular location">
    <subcellularLocation>
        <location evidence="1">Cytoplasm</location>
    </subcellularLocation>
</comment>
<comment type="similarity">
    <text evidence="1">Belongs to the CoaE family.</text>
</comment>
<protein>
    <recommendedName>
        <fullName evidence="1">Dephospho-CoA kinase</fullName>
        <ecNumber evidence="1">2.7.1.24</ecNumber>
    </recommendedName>
    <alternativeName>
        <fullName evidence="1">Dephosphocoenzyme A kinase</fullName>
    </alternativeName>
</protein>
<organism>
    <name type="scientific">Synechococcus sp. (strain JA-2-3B'a(2-13))</name>
    <name type="common">Cyanobacteria bacterium Yellowstone B-Prime</name>
    <dbReference type="NCBI Taxonomy" id="321332"/>
    <lineage>
        <taxon>Bacteria</taxon>
        <taxon>Bacillati</taxon>
        <taxon>Cyanobacteriota</taxon>
        <taxon>Cyanophyceae</taxon>
        <taxon>Synechococcales</taxon>
        <taxon>Synechococcaceae</taxon>
        <taxon>Synechococcus</taxon>
    </lineage>
</organism>
<feature type="chain" id="PRO_0000243354" description="Dephospho-CoA kinase">
    <location>
        <begin position="1"/>
        <end position="238"/>
    </location>
</feature>
<feature type="domain" description="DPCK" evidence="1">
    <location>
        <begin position="3"/>
        <end position="233"/>
    </location>
</feature>
<feature type="region of interest" description="Disordered" evidence="2">
    <location>
        <begin position="110"/>
        <end position="129"/>
    </location>
</feature>
<feature type="region of interest" description="Disordered" evidence="2">
    <location>
        <begin position="219"/>
        <end position="238"/>
    </location>
</feature>
<feature type="binding site" evidence="1">
    <location>
        <begin position="11"/>
        <end position="16"/>
    </location>
    <ligand>
        <name>ATP</name>
        <dbReference type="ChEBI" id="CHEBI:30616"/>
    </ligand>
</feature>
<sequence>MRIIGLTGGVGTGKSTVARILEQHGIPVADADQMARQALAVGSPIRERVLERYGKVIQTPSGDLDRRRLGQIVFADAAERAWLEAQIHPFVRAQLQDFLSALAEQSSKVHGVPLEEEPASQKRSGVGFSSGQGSQTVCLMIPLLFEAHMENWASEIWVVTCTPEQQRQRLARRDPLTPEEIEARIASQWPLAEKVRRADVVLDNSGSLAELEAQVKQALASAGQRPFASPPRAGYSDG</sequence>
<evidence type="ECO:0000255" key="1">
    <source>
        <dbReference type="HAMAP-Rule" id="MF_00376"/>
    </source>
</evidence>
<evidence type="ECO:0000256" key="2">
    <source>
        <dbReference type="SAM" id="MobiDB-lite"/>
    </source>
</evidence>
<gene>
    <name evidence="1" type="primary">coaE</name>
    <name type="ordered locus">CYB_1306</name>
</gene>